<keyword id="KW-0156">Chromatin regulator</keyword>
<keyword id="KW-0227">DNA damage</keyword>
<keyword id="KW-0234">DNA repair</keyword>
<keyword id="KW-0539">Nucleus</keyword>
<keyword id="KW-1185">Reference proteome</keyword>
<keyword id="KW-0804">Transcription</keyword>
<keyword id="KW-0805">Transcription regulation</keyword>
<protein>
    <recommendedName>
        <fullName>Chromatin modification-related protein EAF5</fullName>
    </recommendedName>
</protein>
<dbReference type="EMBL" id="CR380959">
    <property type="protein sequence ID" value="CAG62466.1"/>
    <property type="molecule type" value="Genomic_DNA"/>
</dbReference>
<dbReference type="RefSeq" id="XP_449490.1">
    <property type="nucleotide sequence ID" value="XM_449490.1"/>
</dbReference>
<dbReference type="SMR" id="Q6FJV4"/>
<dbReference type="FunCoup" id="Q6FJV4">
    <property type="interactions" value="135"/>
</dbReference>
<dbReference type="STRING" id="284593.Q6FJV4"/>
<dbReference type="EnsemblFungi" id="CAGL0M03289g-T">
    <property type="protein sequence ID" value="CAGL0M03289g-T-p1"/>
    <property type="gene ID" value="CAGL0M03289g"/>
</dbReference>
<dbReference type="KEGG" id="cgr:2891498"/>
<dbReference type="CGD" id="CAL0136813">
    <property type="gene designation" value="CAGL0M03289g"/>
</dbReference>
<dbReference type="VEuPathDB" id="FungiDB:B1J91_M03289g"/>
<dbReference type="VEuPathDB" id="FungiDB:CAGL0M03289g"/>
<dbReference type="HOGENOM" id="CLU_1337349_0_0_1"/>
<dbReference type="InParanoid" id="Q6FJV4"/>
<dbReference type="Proteomes" id="UP000002428">
    <property type="component" value="Chromosome M"/>
</dbReference>
<dbReference type="GO" id="GO:0005829">
    <property type="term" value="C:cytosol"/>
    <property type="evidence" value="ECO:0007669"/>
    <property type="project" value="EnsemblFungi"/>
</dbReference>
<dbReference type="GO" id="GO:0035267">
    <property type="term" value="C:NuA4 histone acetyltransferase complex"/>
    <property type="evidence" value="ECO:0007669"/>
    <property type="project" value="EnsemblFungi"/>
</dbReference>
<dbReference type="GO" id="GO:1990453">
    <property type="term" value="C:nucleosome disassembly/reassembly complex"/>
    <property type="evidence" value="ECO:0007669"/>
    <property type="project" value="EnsemblFungi"/>
</dbReference>
<dbReference type="GO" id="GO:0006281">
    <property type="term" value="P:DNA repair"/>
    <property type="evidence" value="ECO:0007669"/>
    <property type="project" value="UniProtKB-KW"/>
</dbReference>
<dbReference type="GO" id="GO:0006335">
    <property type="term" value="P:DNA replication-dependent chromatin assembly"/>
    <property type="evidence" value="ECO:0007669"/>
    <property type="project" value="EnsemblFungi"/>
</dbReference>
<dbReference type="GO" id="GO:0006337">
    <property type="term" value="P:nucleosome disassembly"/>
    <property type="evidence" value="ECO:0007669"/>
    <property type="project" value="EnsemblFungi"/>
</dbReference>
<dbReference type="GO" id="GO:0032968">
    <property type="term" value="P:positive regulation of transcription elongation by RNA polymerase II"/>
    <property type="evidence" value="ECO:0007669"/>
    <property type="project" value="EnsemblFungi"/>
</dbReference>
<dbReference type="InterPro" id="IPR026226">
    <property type="entry name" value="EAF5"/>
</dbReference>
<dbReference type="PRINTS" id="PR02067">
    <property type="entry name" value="PROTEINEAF5"/>
</dbReference>
<reference key="1">
    <citation type="journal article" date="2004" name="Nature">
        <title>Genome evolution in yeasts.</title>
        <authorList>
            <person name="Dujon B."/>
            <person name="Sherman D."/>
            <person name="Fischer G."/>
            <person name="Durrens P."/>
            <person name="Casaregola S."/>
            <person name="Lafontaine I."/>
            <person name="de Montigny J."/>
            <person name="Marck C."/>
            <person name="Neuveglise C."/>
            <person name="Talla E."/>
            <person name="Goffard N."/>
            <person name="Frangeul L."/>
            <person name="Aigle M."/>
            <person name="Anthouard V."/>
            <person name="Babour A."/>
            <person name="Barbe V."/>
            <person name="Barnay S."/>
            <person name="Blanchin S."/>
            <person name="Beckerich J.-M."/>
            <person name="Beyne E."/>
            <person name="Bleykasten C."/>
            <person name="Boisrame A."/>
            <person name="Boyer J."/>
            <person name="Cattolico L."/>
            <person name="Confanioleri F."/>
            <person name="de Daruvar A."/>
            <person name="Despons L."/>
            <person name="Fabre E."/>
            <person name="Fairhead C."/>
            <person name="Ferry-Dumazet H."/>
            <person name="Groppi A."/>
            <person name="Hantraye F."/>
            <person name="Hennequin C."/>
            <person name="Jauniaux N."/>
            <person name="Joyet P."/>
            <person name="Kachouri R."/>
            <person name="Kerrest A."/>
            <person name="Koszul R."/>
            <person name="Lemaire M."/>
            <person name="Lesur I."/>
            <person name="Ma L."/>
            <person name="Muller H."/>
            <person name="Nicaud J.-M."/>
            <person name="Nikolski M."/>
            <person name="Oztas S."/>
            <person name="Ozier-Kalogeropoulos O."/>
            <person name="Pellenz S."/>
            <person name="Potier S."/>
            <person name="Richard G.-F."/>
            <person name="Straub M.-L."/>
            <person name="Suleau A."/>
            <person name="Swennen D."/>
            <person name="Tekaia F."/>
            <person name="Wesolowski-Louvel M."/>
            <person name="Westhof E."/>
            <person name="Wirth B."/>
            <person name="Zeniou-Meyer M."/>
            <person name="Zivanovic Y."/>
            <person name="Bolotin-Fukuhara M."/>
            <person name="Thierry A."/>
            <person name="Bouchier C."/>
            <person name="Caudron B."/>
            <person name="Scarpelli C."/>
            <person name="Gaillardin C."/>
            <person name="Weissenbach J."/>
            <person name="Wincker P."/>
            <person name="Souciet J.-L."/>
        </authorList>
    </citation>
    <scope>NUCLEOTIDE SEQUENCE [LARGE SCALE GENOMIC DNA]</scope>
    <source>
        <strain>ATCC 2001 / BCRC 20586 / JCM 3761 / NBRC 0622 / NRRL Y-65 / CBS 138</strain>
    </source>
</reference>
<name>EAF5_CANGA</name>
<accession>Q6FJV4</accession>
<comment type="function">
    <text evidence="1">Component of the NuA4 histone acetyltransferase complex which is involved in transcriptional activation of selected genes principally by acetylation of nucleosomal histone H4 and H2A. The NuA4 complex is also involved in DNA repair (By similarity).</text>
</comment>
<comment type="subunit">
    <text evidence="1">Component of the NuA4 histone acetyltransferase complex.</text>
</comment>
<comment type="subcellular location">
    <subcellularLocation>
        <location evidence="1">Nucleus</location>
    </subcellularLocation>
</comment>
<comment type="similarity">
    <text evidence="2">Belongs to the EAF5 family.</text>
</comment>
<feature type="chain" id="PRO_0000086890" description="Chromatin modification-related protein EAF5">
    <location>
        <begin position="1"/>
        <end position="205"/>
    </location>
</feature>
<evidence type="ECO:0000250" key="1"/>
<evidence type="ECO:0000305" key="2"/>
<proteinExistence type="inferred from homology"/>
<organism>
    <name type="scientific">Candida glabrata (strain ATCC 2001 / BCRC 20586 / JCM 3761 / NBRC 0622 / NRRL Y-65 / CBS 138)</name>
    <name type="common">Yeast</name>
    <name type="synonym">Nakaseomyces glabratus</name>
    <dbReference type="NCBI Taxonomy" id="284593"/>
    <lineage>
        <taxon>Eukaryota</taxon>
        <taxon>Fungi</taxon>
        <taxon>Dikarya</taxon>
        <taxon>Ascomycota</taxon>
        <taxon>Saccharomycotina</taxon>
        <taxon>Saccharomycetes</taxon>
        <taxon>Saccharomycetales</taxon>
        <taxon>Saccharomycetaceae</taxon>
        <taxon>Nakaseomyces</taxon>
    </lineage>
</organism>
<sequence length="205" mass="23848">MNEEIQTLLIYQICDSLRFQANMEDISVDDVMDVMQENIMVECLLDGVIMDKADVQKIVIQYVTDGELGEEAIGDKMESMYSNSRKKLLKEIDDLDNTISTNRKKDKLLNLYRDTVLNRLQNKKTVLDKLYHGMKEDSSVIRNRIYLERIKNETPNSIAELQLMLQRSIADCIMSEPIGSEKYNIAKEIQINLEDTIRFMKRALE</sequence>
<gene>
    <name type="primary">EAF5</name>
    <name type="ordered locus">CAGL0M03289g</name>
</gene>